<reference key="1">
    <citation type="journal article" date="2005" name="J. Bacteriol.">
        <title>Insights into genome plasticity and pathogenicity of the plant pathogenic Bacterium Xanthomonas campestris pv. vesicatoria revealed by the complete genome sequence.</title>
        <authorList>
            <person name="Thieme F."/>
            <person name="Koebnik R."/>
            <person name="Bekel T."/>
            <person name="Berger C."/>
            <person name="Boch J."/>
            <person name="Buettner D."/>
            <person name="Caldana C."/>
            <person name="Gaigalat L."/>
            <person name="Goesmann A."/>
            <person name="Kay S."/>
            <person name="Kirchner O."/>
            <person name="Lanz C."/>
            <person name="Linke B."/>
            <person name="McHardy A.C."/>
            <person name="Meyer F."/>
            <person name="Mittenhuber G."/>
            <person name="Nies D.H."/>
            <person name="Niesbach-Kloesgen U."/>
            <person name="Patschkowski T."/>
            <person name="Rueckert C."/>
            <person name="Rupp O."/>
            <person name="Schneiker S."/>
            <person name="Schuster S.C."/>
            <person name="Vorhoelter F.J."/>
            <person name="Weber E."/>
            <person name="Puehler A."/>
            <person name="Bonas U."/>
            <person name="Bartels D."/>
            <person name="Kaiser O."/>
        </authorList>
    </citation>
    <scope>NUCLEOTIDE SEQUENCE [LARGE SCALE GENOMIC DNA]</scope>
    <source>
        <strain>85-10</strain>
    </source>
</reference>
<evidence type="ECO:0000255" key="1">
    <source>
        <dbReference type="HAMAP-Rule" id="MF_00300"/>
    </source>
</evidence>
<evidence type="ECO:0000256" key="2">
    <source>
        <dbReference type="SAM" id="MobiDB-lite"/>
    </source>
</evidence>
<feature type="chain" id="PRO_0000256360" description="Chorismate synthase">
    <location>
        <begin position="1"/>
        <end position="367"/>
    </location>
</feature>
<feature type="region of interest" description="Disordered" evidence="2">
    <location>
        <begin position="41"/>
        <end position="60"/>
    </location>
</feature>
<feature type="binding site" evidence="1">
    <location>
        <position position="48"/>
    </location>
    <ligand>
        <name>NADP(+)</name>
        <dbReference type="ChEBI" id="CHEBI:58349"/>
    </ligand>
</feature>
<feature type="binding site" evidence="1">
    <location>
        <position position="54"/>
    </location>
    <ligand>
        <name>NADP(+)</name>
        <dbReference type="ChEBI" id="CHEBI:58349"/>
    </ligand>
</feature>
<feature type="binding site" evidence="1">
    <location>
        <begin position="125"/>
        <end position="127"/>
    </location>
    <ligand>
        <name>FMN</name>
        <dbReference type="ChEBI" id="CHEBI:58210"/>
    </ligand>
</feature>
<feature type="binding site" evidence="1">
    <location>
        <begin position="238"/>
        <end position="239"/>
    </location>
    <ligand>
        <name>FMN</name>
        <dbReference type="ChEBI" id="CHEBI:58210"/>
    </ligand>
</feature>
<feature type="binding site" evidence="1">
    <location>
        <position position="278"/>
    </location>
    <ligand>
        <name>FMN</name>
        <dbReference type="ChEBI" id="CHEBI:58210"/>
    </ligand>
</feature>
<feature type="binding site" evidence="1">
    <location>
        <begin position="293"/>
        <end position="297"/>
    </location>
    <ligand>
        <name>FMN</name>
        <dbReference type="ChEBI" id="CHEBI:58210"/>
    </ligand>
</feature>
<feature type="binding site" evidence="1">
    <location>
        <position position="319"/>
    </location>
    <ligand>
        <name>FMN</name>
        <dbReference type="ChEBI" id="CHEBI:58210"/>
    </ligand>
</feature>
<proteinExistence type="inferred from homology"/>
<organism>
    <name type="scientific">Xanthomonas euvesicatoria pv. vesicatoria (strain 85-10)</name>
    <name type="common">Xanthomonas campestris pv. vesicatoria</name>
    <dbReference type="NCBI Taxonomy" id="316273"/>
    <lineage>
        <taxon>Bacteria</taxon>
        <taxon>Pseudomonadati</taxon>
        <taxon>Pseudomonadota</taxon>
        <taxon>Gammaproteobacteria</taxon>
        <taxon>Lysobacterales</taxon>
        <taxon>Lysobacteraceae</taxon>
        <taxon>Xanthomonas</taxon>
    </lineage>
</organism>
<gene>
    <name evidence="1" type="primary">aroC</name>
    <name type="ordered locus">XCV2877</name>
</gene>
<dbReference type="EC" id="4.2.3.5" evidence="1"/>
<dbReference type="EMBL" id="AM039952">
    <property type="protein sequence ID" value="CAJ24556.1"/>
    <property type="molecule type" value="Genomic_DNA"/>
</dbReference>
<dbReference type="RefSeq" id="WP_008577522.1">
    <property type="nucleotide sequence ID" value="NZ_CP017190.1"/>
</dbReference>
<dbReference type="SMR" id="Q3BRK5"/>
<dbReference type="STRING" id="456327.BJD11_08465"/>
<dbReference type="GeneID" id="97511013"/>
<dbReference type="KEGG" id="xcv:XCV2877"/>
<dbReference type="eggNOG" id="COG0082">
    <property type="taxonomic scope" value="Bacteria"/>
</dbReference>
<dbReference type="HOGENOM" id="CLU_034547_0_2_6"/>
<dbReference type="UniPathway" id="UPA00053">
    <property type="reaction ID" value="UER00090"/>
</dbReference>
<dbReference type="Proteomes" id="UP000007069">
    <property type="component" value="Chromosome"/>
</dbReference>
<dbReference type="GO" id="GO:0005829">
    <property type="term" value="C:cytosol"/>
    <property type="evidence" value="ECO:0007669"/>
    <property type="project" value="TreeGrafter"/>
</dbReference>
<dbReference type="GO" id="GO:0004107">
    <property type="term" value="F:chorismate synthase activity"/>
    <property type="evidence" value="ECO:0007669"/>
    <property type="project" value="UniProtKB-UniRule"/>
</dbReference>
<dbReference type="GO" id="GO:0010181">
    <property type="term" value="F:FMN binding"/>
    <property type="evidence" value="ECO:0007669"/>
    <property type="project" value="TreeGrafter"/>
</dbReference>
<dbReference type="GO" id="GO:0008652">
    <property type="term" value="P:amino acid biosynthetic process"/>
    <property type="evidence" value="ECO:0007669"/>
    <property type="project" value="UniProtKB-KW"/>
</dbReference>
<dbReference type="GO" id="GO:0009073">
    <property type="term" value="P:aromatic amino acid family biosynthetic process"/>
    <property type="evidence" value="ECO:0007669"/>
    <property type="project" value="UniProtKB-KW"/>
</dbReference>
<dbReference type="GO" id="GO:0009423">
    <property type="term" value="P:chorismate biosynthetic process"/>
    <property type="evidence" value="ECO:0007669"/>
    <property type="project" value="UniProtKB-UniRule"/>
</dbReference>
<dbReference type="CDD" id="cd07304">
    <property type="entry name" value="Chorismate_synthase"/>
    <property type="match status" value="1"/>
</dbReference>
<dbReference type="FunFam" id="3.60.150.10:FF:000001">
    <property type="entry name" value="Chorismate synthase"/>
    <property type="match status" value="1"/>
</dbReference>
<dbReference type="Gene3D" id="3.60.150.10">
    <property type="entry name" value="Chorismate synthase AroC"/>
    <property type="match status" value="1"/>
</dbReference>
<dbReference type="HAMAP" id="MF_00300">
    <property type="entry name" value="Chorismate_synth"/>
    <property type="match status" value="1"/>
</dbReference>
<dbReference type="InterPro" id="IPR000453">
    <property type="entry name" value="Chorismate_synth"/>
</dbReference>
<dbReference type="InterPro" id="IPR035904">
    <property type="entry name" value="Chorismate_synth_AroC_sf"/>
</dbReference>
<dbReference type="InterPro" id="IPR020541">
    <property type="entry name" value="Chorismate_synthase_CS"/>
</dbReference>
<dbReference type="NCBIfam" id="TIGR00033">
    <property type="entry name" value="aroC"/>
    <property type="match status" value="1"/>
</dbReference>
<dbReference type="NCBIfam" id="NF003793">
    <property type="entry name" value="PRK05382.1"/>
    <property type="match status" value="1"/>
</dbReference>
<dbReference type="PANTHER" id="PTHR21085">
    <property type="entry name" value="CHORISMATE SYNTHASE"/>
    <property type="match status" value="1"/>
</dbReference>
<dbReference type="PANTHER" id="PTHR21085:SF0">
    <property type="entry name" value="CHORISMATE SYNTHASE"/>
    <property type="match status" value="1"/>
</dbReference>
<dbReference type="Pfam" id="PF01264">
    <property type="entry name" value="Chorismate_synt"/>
    <property type="match status" value="1"/>
</dbReference>
<dbReference type="PIRSF" id="PIRSF001456">
    <property type="entry name" value="Chorismate_synth"/>
    <property type="match status" value="1"/>
</dbReference>
<dbReference type="SUPFAM" id="SSF103263">
    <property type="entry name" value="Chorismate synthase, AroC"/>
    <property type="match status" value="1"/>
</dbReference>
<dbReference type="PROSITE" id="PS00787">
    <property type="entry name" value="CHORISMATE_SYNTHASE_1"/>
    <property type="match status" value="1"/>
</dbReference>
<dbReference type="PROSITE" id="PS00788">
    <property type="entry name" value="CHORISMATE_SYNTHASE_2"/>
    <property type="match status" value="1"/>
</dbReference>
<dbReference type="PROSITE" id="PS00789">
    <property type="entry name" value="CHORISMATE_SYNTHASE_3"/>
    <property type="match status" value="1"/>
</dbReference>
<protein>
    <recommendedName>
        <fullName evidence="1">Chorismate synthase</fullName>
        <shortName evidence="1">CS</shortName>
        <ecNumber evidence="1">4.2.3.5</ecNumber>
    </recommendedName>
    <alternativeName>
        <fullName evidence="1">5-enolpyruvylshikimate-3-phosphate phospholyase</fullName>
    </alternativeName>
</protein>
<sequence>MSANSFGKLFTVTTFGESHGPAIGCVVDGCPPGLELAPEEFTHDLQRRASGKSRHTSARREADEIEILSGVYEGRTTGTPIGLLIRNTDQRSKDYSNIAQQFRPGHADYTYWQKYGIRDPRGGGRSSARETTMRVAAGVIAKKWLKQRYGVLVRGFLSQLGQIRPAGFDWDAVEDNPFFWPHAAQVPELETYMDALRKSGDSVGARVDVVAGGVPAGWGEPIYGKLDAELAAALMSINAVKGVEIGDGFASAAQKGTEHRDLITPEGFLSNHAGGILGGISTGQAVTASMVLKPTSSLRLPGATVDADGSVVDVITTGRHDPCVGIRATPIAEAMMALVLMDQALRHRAQCGDVGEVSPRIPGQVDV</sequence>
<name>AROC_XANE5</name>
<keyword id="KW-0028">Amino-acid biosynthesis</keyword>
<keyword id="KW-0057">Aromatic amino acid biosynthesis</keyword>
<keyword id="KW-0274">FAD</keyword>
<keyword id="KW-0285">Flavoprotein</keyword>
<keyword id="KW-0288">FMN</keyword>
<keyword id="KW-0456">Lyase</keyword>
<keyword id="KW-0521">NADP</keyword>
<accession>Q3BRK5</accession>
<comment type="function">
    <text evidence="1">Catalyzes the anti-1,4-elimination of the C-3 phosphate and the C-6 proR hydrogen from 5-enolpyruvylshikimate-3-phosphate (EPSP) to yield chorismate, which is the branch point compound that serves as the starting substrate for the three terminal pathways of aromatic amino acid biosynthesis. This reaction introduces a second double bond into the aromatic ring system.</text>
</comment>
<comment type="catalytic activity">
    <reaction evidence="1">
        <text>5-O-(1-carboxyvinyl)-3-phosphoshikimate = chorismate + phosphate</text>
        <dbReference type="Rhea" id="RHEA:21020"/>
        <dbReference type="ChEBI" id="CHEBI:29748"/>
        <dbReference type="ChEBI" id="CHEBI:43474"/>
        <dbReference type="ChEBI" id="CHEBI:57701"/>
        <dbReference type="EC" id="4.2.3.5"/>
    </reaction>
</comment>
<comment type="cofactor">
    <cofactor evidence="1">
        <name>FMNH2</name>
        <dbReference type="ChEBI" id="CHEBI:57618"/>
    </cofactor>
    <text evidence="1">Reduced FMN (FMNH(2)).</text>
</comment>
<comment type="pathway">
    <text evidence="1">Metabolic intermediate biosynthesis; chorismate biosynthesis; chorismate from D-erythrose 4-phosphate and phosphoenolpyruvate: step 7/7.</text>
</comment>
<comment type="subunit">
    <text evidence="1">Homotetramer.</text>
</comment>
<comment type="similarity">
    <text evidence="1">Belongs to the chorismate synthase family.</text>
</comment>